<sequence>MEQSTTRSLLKGKILKILTLLLLVRLGLYIPVPGVELDILTQGQTSNPMFGFAKTLVGNSFLGIGSLGILPYINASIIIQLLTPLFPNLERLQKEEGELGRQQISRYTRYLTCIWAIVLSSAIAFFLIKPITFGWSLKLGLEIVLSLTVGSILSMWFAELITEESLGNGSSMIIFINIVGGIPNNLSSLSKTFSAANLASAIPLLLTGLGIYLGIVLIIIFFQESYKKITIVSAKQLNLTTSAQTQSERLANNSFIPLKLNQGGIMPLVFSSTIAVVFMYPAQILLSSALLTNAAGLASKLLTIYSFGINFVLVIFFSCFYVSLVLKPKDMSENLGKMAYSIPGIRQGKETTKYLEKVINRLAFIGGLFLAFLAFFPLFVGNFIQFGLFKNLTSLLILIGVITDTTSQITGYLVSTRYEGLK</sequence>
<feature type="chain" id="PRO_0000414215" description="Protein translocase subunit SecY">
    <location>
        <begin position="1"/>
        <end position="422"/>
    </location>
</feature>
<feature type="transmembrane region" description="Helical" evidence="2">
    <location>
        <begin position="17"/>
        <end position="37"/>
    </location>
</feature>
<feature type="transmembrane region" description="Helical" evidence="2">
    <location>
        <begin position="61"/>
        <end position="81"/>
    </location>
</feature>
<feature type="transmembrane region" description="Helical" evidence="2">
    <location>
        <begin position="114"/>
        <end position="134"/>
    </location>
</feature>
<feature type="transmembrane region" description="Helical" evidence="2">
    <location>
        <begin position="141"/>
        <end position="161"/>
    </location>
</feature>
<feature type="transmembrane region" description="Helical" evidence="2">
    <location>
        <begin position="166"/>
        <end position="186"/>
    </location>
</feature>
<feature type="transmembrane region" description="Helical" evidence="2">
    <location>
        <begin position="202"/>
        <end position="222"/>
    </location>
</feature>
<feature type="transmembrane region" description="Helical" evidence="2">
    <location>
        <begin position="265"/>
        <end position="285"/>
    </location>
</feature>
<feature type="transmembrane region" description="Helical" evidence="2">
    <location>
        <begin position="306"/>
        <end position="326"/>
    </location>
</feature>
<feature type="transmembrane region" description="Helical" evidence="2">
    <location>
        <begin position="364"/>
        <end position="384"/>
    </location>
</feature>
<feature type="transmembrane region" description="Helical" evidence="2">
    <location>
        <begin position="394"/>
        <end position="414"/>
    </location>
</feature>
<dbReference type="EMBL" id="AY741371">
    <property type="protein sequence ID" value="AAX13915.1"/>
    <property type="molecule type" value="Genomic_DNA"/>
</dbReference>
<dbReference type="RefSeq" id="YP_277416.1">
    <property type="nucleotide sequence ID" value="NC_007288.1"/>
</dbReference>
<dbReference type="SMR" id="Q4G351"/>
<dbReference type="STRING" id="2903.Q4G351"/>
<dbReference type="GeneID" id="3562500"/>
<dbReference type="GO" id="GO:0009535">
    <property type="term" value="C:chloroplast thylakoid membrane"/>
    <property type="evidence" value="ECO:0007669"/>
    <property type="project" value="UniProtKB-SubCell"/>
</dbReference>
<dbReference type="GO" id="GO:0065002">
    <property type="term" value="P:intracellular protein transmembrane transport"/>
    <property type="evidence" value="ECO:0007669"/>
    <property type="project" value="UniProtKB-UniRule"/>
</dbReference>
<dbReference type="GO" id="GO:0006605">
    <property type="term" value="P:protein targeting"/>
    <property type="evidence" value="ECO:0007669"/>
    <property type="project" value="UniProtKB-UniRule"/>
</dbReference>
<dbReference type="Gene3D" id="1.10.3370.10">
    <property type="entry name" value="SecY subunit domain"/>
    <property type="match status" value="1"/>
</dbReference>
<dbReference type="HAMAP" id="MF_01465">
    <property type="entry name" value="SecY"/>
    <property type="match status" value="1"/>
</dbReference>
<dbReference type="InterPro" id="IPR026593">
    <property type="entry name" value="SecY"/>
</dbReference>
<dbReference type="InterPro" id="IPR002208">
    <property type="entry name" value="SecY/SEC61-alpha"/>
</dbReference>
<dbReference type="InterPro" id="IPR023201">
    <property type="entry name" value="SecY_dom_sf"/>
</dbReference>
<dbReference type="NCBIfam" id="TIGR00967">
    <property type="entry name" value="3a0501s007"/>
    <property type="match status" value="1"/>
</dbReference>
<dbReference type="PANTHER" id="PTHR10906">
    <property type="entry name" value="SECY/SEC61-ALPHA FAMILY MEMBER"/>
    <property type="match status" value="1"/>
</dbReference>
<dbReference type="Pfam" id="PF00344">
    <property type="entry name" value="SecY"/>
    <property type="match status" value="1"/>
</dbReference>
<dbReference type="PIRSF" id="PIRSF004557">
    <property type="entry name" value="SecY"/>
    <property type="match status" value="1"/>
</dbReference>
<dbReference type="PRINTS" id="PR00303">
    <property type="entry name" value="SECYTRNLCASE"/>
</dbReference>
<dbReference type="SUPFAM" id="SSF103491">
    <property type="entry name" value="Preprotein translocase SecY subunit"/>
    <property type="match status" value="1"/>
</dbReference>
<accession>Q4G351</accession>
<proteinExistence type="inferred from homology"/>
<protein>
    <recommendedName>
        <fullName>Protein translocase subunit SecY</fullName>
    </recommendedName>
</protein>
<name>SECY_EMIHU</name>
<geneLocation type="chloroplast"/>
<organism>
    <name type="scientific">Emiliania huxleyi</name>
    <name type="common">Coccolithophore</name>
    <name type="synonym">Pontosphaera huxleyi</name>
    <dbReference type="NCBI Taxonomy" id="2903"/>
    <lineage>
        <taxon>Eukaryota</taxon>
        <taxon>Haptista</taxon>
        <taxon>Haptophyta</taxon>
        <taxon>Prymnesiophyceae</taxon>
        <taxon>Isochrysidales</taxon>
        <taxon>Noelaerhabdaceae</taxon>
        <taxon>Emiliania</taxon>
    </lineage>
</organism>
<evidence type="ECO:0000250" key="1"/>
<evidence type="ECO:0000255" key="2"/>
<evidence type="ECO:0000305" key="3"/>
<reference key="1">
    <citation type="journal article" date="2005" name="DNA Res.">
        <title>The complete plastid genome sequence of the haptophyte Emiliania huxleyi: a comparison to other plastid genomes.</title>
        <authorList>
            <person name="Sanchez-Puerta M.V."/>
            <person name="Bachvaroff T.R."/>
            <person name="Delwiche C.F."/>
        </authorList>
    </citation>
    <scope>NUCLEOTIDE SEQUENCE [LARGE SCALE GENOMIC DNA]</scope>
    <source>
        <strain>CCMP373 / CSIRO-CS-57 / BT6</strain>
    </source>
</reference>
<keyword id="KW-0150">Chloroplast</keyword>
<keyword id="KW-0472">Membrane</keyword>
<keyword id="KW-0934">Plastid</keyword>
<keyword id="KW-0653">Protein transport</keyword>
<keyword id="KW-0793">Thylakoid</keyword>
<keyword id="KW-0811">Translocation</keyword>
<keyword id="KW-0812">Transmembrane</keyword>
<keyword id="KW-1133">Transmembrane helix</keyword>
<keyword id="KW-0813">Transport</keyword>
<gene>
    <name type="primary">secY</name>
</gene>
<comment type="function">
    <text evidence="1">The central subunit of the protein translocation channel SecYE. Consists of two halves formed by TMs 1-5 and 6-10. These two domains form a lateral gate at the front which open onto the bilayer between TMs 2 and 7, and are clamped together by SecE at the back. The channel is closed by both a pore ring composed of hydrophobic SecY resides and a short helix (helix 2A) on the extracellular side of the membrane which forms a plug (By similarity).</text>
</comment>
<comment type="subunit">
    <text evidence="1">Component of the plastid Sec protein translocase complex, which is composed of at least SecY, SecE and SecG.</text>
</comment>
<comment type="subcellular location">
    <subcellularLocation>
        <location evidence="1">Plastid</location>
        <location evidence="1">Chloroplast thylakoid membrane</location>
        <topology evidence="1">Multi-pass membrane protein</topology>
    </subcellularLocation>
</comment>
<comment type="similarity">
    <text evidence="3">Belongs to the SecY/SEC61-alpha family.</text>
</comment>